<protein>
    <recommendedName>
        <fullName evidence="1">Putative pre-16S rRNA nuclease</fullName>
        <ecNumber evidence="1">3.1.-.-</ecNumber>
    </recommendedName>
</protein>
<reference key="1">
    <citation type="submission" date="2006-03" db="EMBL/GenBank/DDBJ databases">
        <title>Complete genome sequence of Francisella tularensis LVS (Live Vaccine Strain).</title>
        <authorList>
            <person name="Chain P."/>
            <person name="Larimer F."/>
            <person name="Land M."/>
            <person name="Stilwagen S."/>
            <person name="Larsson P."/>
            <person name="Bearden S."/>
            <person name="Chu M."/>
            <person name="Oyston P."/>
            <person name="Forsman M."/>
            <person name="Andersson S."/>
            <person name="Lindler L."/>
            <person name="Titball R."/>
            <person name="Garcia E."/>
        </authorList>
    </citation>
    <scope>NUCLEOTIDE SEQUENCE [LARGE SCALE GENOMIC DNA]</scope>
    <source>
        <strain>LVS</strain>
    </source>
</reference>
<comment type="function">
    <text evidence="1">Could be a nuclease involved in processing of the 5'-end of pre-16S rRNA.</text>
</comment>
<comment type="subcellular location">
    <subcellularLocation>
        <location evidence="1">Cytoplasm</location>
    </subcellularLocation>
</comment>
<comment type="similarity">
    <text evidence="1">Belongs to the YqgF nuclease family.</text>
</comment>
<dbReference type="EC" id="3.1.-.-" evidence="1"/>
<dbReference type="EMBL" id="AM233362">
    <property type="protein sequence ID" value="CAJ79654.1"/>
    <property type="molecule type" value="Genomic_DNA"/>
</dbReference>
<dbReference type="SMR" id="Q2A304"/>
<dbReference type="KEGG" id="ftl:FTL_1215"/>
<dbReference type="Proteomes" id="UP000001944">
    <property type="component" value="Chromosome"/>
</dbReference>
<dbReference type="GO" id="GO:0005829">
    <property type="term" value="C:cytosol"/>
    <property type="evidence" value="ECO:0007669"/>
    <property type="project" value="TreeGrafter"/>
</dbReference>
<dbReference type="GO" id="GO:0004518">
    <property type="term" value="F:nuclease activity"/>
    <property type="evidence" value="ECO:0007669"/>
    <property type="project" value="UniProtKB-KW"/>
</dbReference>
<dbReference type="GO" id="GO:0000967">
    <property type="term" value="P:rRNA 5'-end processing"/>
    <property type="evidence" value="ECO:0007669"/>
    <property type="project" value="UniProtKB-UniRule"/>
</dbReference>
<dbReference type="CDD" id="cd16964">
    <property type="entry name" value="YqgF"/>
    <property type="match status" value="1"/>
</dbReference>
<dbReference type="Gene3D" id="3.30.420.140">
    <property type="entry name" value="YqgF/RNase H-like domain"/>
    <property type="match status" value="1"/>
</dbReference>
<dbReference type="HAMAP" id="MF_00651">
    <property type="entry name" value="Nuclease_YqgF"/>
    <property type="match status" value="1"/>
</dbReference>
<dbReference type="InterPro" id="IPR012337">
    <property type="entry name" value="RNaseH-like_sf"/>
</dbReference>
<dbReference type="InterPro" id="IPR005227">
    <property type="entry name" value="YqgF"/>
</dbReference>
<dbReference type="InterPro" id="IPR006641">
    <property type="entry name" value="YqgF/RNaseH-like_dom"/>
</dbReference>
<dbReference type="InterPro" id="IPR037027">
    <property type="entry name" value="YqgF/RNaseH-like_dom_sf"/>
</dbReference>
<dbReference type="NCBIfam" id="TIGR00250">
    <property type="entry name" value="RNAse_H_YqgF"/>
    <property type="match status" value="1"/>
</dbReference>
<dbReference type="PANTHER" id="PTHR33317">
    <property type="entry name" value="POLYNUCLEOTIDYL TRANSFERASE, RIBONUCLEASE H-LIKE SUPERFAMILY PROTEIN"/>
    <property type="match status" value="1"/>
</dbReference>
<dbReference type="PANTHER" id="PTHR33317:SF4">
    <property type="entry name" value="POLYNUCLEOTIDYL TRANSFERASE, RIBONUCLEASE H-LIKE SUPERFAMILY PROTEIN"/>
    <property type="match status" value="1"/>
</dbReference>
<dbReference type="Pfam" id="PF03652">
    <property type="entry name" value="RuvX"/>
    <property type="match status" value="1"/>
</dbReference>
<dbReference type="SMART" id="SM00732">
    <property type="entry name" value="YqgFc"/>
    <property type="match status" value="1"/>
</dbReference>
<dbReference type="SUPFAM" id="SSF53098">
    <property type="entry name" value="Ribonuclease H-like"/>
    <property type="match status" value="1"/>
</dbReference>
<proteinExistence type="inferred from homology"/>
<feature type="chain" id="PRO_0000257535" description="Putative pre-16S rRNA nuclease">
    <location>
        <begin position="1"/>
        <end position="136"/>
    </location>
</feature>
<keyword id="KW-0963">Cytoplasm</keyword>
<keyword id="KW-0378">Hydrolase</keyword>
<keyword id="KW-0540">Nuclease</keyword>
<keyword id="KW-1185">Reference proteome</keyword>
<keyword id="KW-0690">Ribosome biogenesis</keyword>
<organism>
    <name type="scientific">Francisella tularensis subsp. holarctica (strain LVS)</name>
    <dbReference type="NCBI Taxonomy" id="376619"/>
    <lineage>
        <taxon>Bacteria</taxon>
        <taxon>Pseudomonadati</taxon>
        <taxon>Pseudomonadota</taxon>
        <taxon>Gammaproteobacteria</taxon>
        <taxon>Thiotrichales</taxon>
        <taxon>Francisellaceae</taxon>
        <taxon>Francisella</taxon>
    </lineage>
</organism>
<gene>
    <name type="ordered locus">FTL_1215</name>
</gene>
<sequence length="136" mass="15510">MFQSLIAIDYGKARIGIASGQMITKTATPIGTVEAYDGVPNWIELDKIIKRWNPSDIIIGLPLDTQNFETDITKSAKDFAKEVQQRYQRKVHLINEAYSTREARWRLEEVKSKKVSHIKVDALAACVILETWMSEN</sequence>
<evidence type="ECO:0000255" key="1">
    <source>
        <dbReference type="HAMAP-Rule" id="MF_00651"/>
    </source>
</evidence>
<accession>Q2A304</accession>
<name>YQGF_FRATH</name>